<name>PNP_MYCPA</name>
<sequence length="757" mass="80542">MSVAEIEEGVFEATATIDNGSFGTRTIRFETGRLAQQAAGAVVAYLDDENMLLSATTASKSPKEHFDFFPLTVDVEERMYAAGRIPGSFFRREGRPSTDAILTCRLIDRPLRPSFVDGLRNEIQVVVTILSLDPNDLYDVLAINAASASTQLGGLPFSGPIGGVRVALIDGTWVAFPTVEQLERAVFDMVVAGRKVDGADGPDVAIMMVEAEATSNVIELIDGGAQAPTETVVAQGLEAAKPFIEVLCTAQQELADKAARPTSDYPTFPDYGDDVYYSVASVATDELSKALTIGGKAERDARTDELKAEVLARLAETYEGREKEVSAAFRSLTKKLVRQRILTDHFRIDGRGITDIRALSAEVAVVPRAHGSALFQRGETQILGVTTLDMVKMAQQIDSLGPETTKRYMHHYNFPPFSTGETGRVGSPKRREIGHGALAERALVPVLPSLEDFPYAIRQVSEALGSNGSTSMGSVCASTLALLNAGVPLKAPVAGIAMGLVSDDIEVEAGDGTKSLERRFVTLTDILGAEDAFGDMDFKVAGTKDFVTALQLDTKLDGIPSQVLAGALSQAKDARLTILEVMAEAIDEPDEMSPYAPRVTTIRVPVDKIGEVIGPKGKIINAITEETGAQISIEDDGTVFVGATDGPSAQAAIDRINAIANPQLPTVGERFLGTVVKTTDFGAFVSLLPGRDGLVHISKLGKGKRIAKVEDVVNVGDKLRVEIADIDKRGKISLVLVEEDNSAPADTPAAAPADATS</sequence>
<keyword id="KW-0963">Cytoplasm</keyword>
<keyword id="KW-0460">Magnesium</keyword>
<keyword id="KW-0479">Metal-binding</keyword>
<keyword id="KW-0548">Nucleotidyltransferase</keyword>
<keyword id="KW-1185">Reference proteome</keyword>
<keyword id="KW-0694">RNA-binding</keyword>
<keyword id="KW-0808">Transferase</keyword>
<protein>
    <recommendedName>
        <fullName evidence="1">Polyribonucleotide nucleotidyltransferase</fullName>
        <ecNumber evidence="1">2.7.7.8</ecNumber>
    </recommendedName>
    <alternativeName>
        <fullName evidence="1">Polynucleotide phosphorylase</fullName>
        <shortName evidence="1">PNPase</shortName>
    </alternativeName>
</protein>
<dbReference type="EC" id="2.7.7.8" evidence="1"/>
<dbReference type="EMBL" id="AE016958">
    <property type="protein sequence ID" value="AAS05208.1"/>
    <property type="molecule type" value="Genomic_DNA"/>
</dbReference>
<dbReference type="RefSeq" id="WP_003875165.1">
    <property type="nucleotide sequence ID" value="NZ_CP106873.1"/>
</dbReference>
<dbReference type="SMR" id="Q73VX0"/>
<dbReference type="STRING" id="262316.MAP_2891c"/>
<dbReference type="KEGG" id="mpa:MAP_2891c"/>
<dbReference type="eggNOG" id="COG1185">
    <property type="taxonomic scope" value="Bacteria"/>
</dbReference>
<dbReference type="HOGENOM" id="CLU_004217_2_2_11"/>
<dbReference type="Proteomes" id="UP000000580">
    <property type="component" value="Chromosome"/>
</dbReference>
<dbReference type="GO" id="GO:0005829">
    <property type="term" value="C:cytosol"/>
    <property type="evidence" value="ECO:0007669"/>
    <property type="project" value="TreeGrafter"/>
</dbReference>
<dbReference type="GO" id="GO:0000175">
    <property type="term" value="F:3'-5'-RNA exonuclease activity"/>
    <property type="evidence" value="ECO:0007669"/>
    <property type="project" value="TreeGrafter"/>
</dbReference>
<dbReference type="GO" id="GO:0000287">
    <property type="term" value="F:magnesium ion binding"/>
    <property type="evidence" value="ECO:0007669"/>
    <property type="project" value="UniProtKB-UniRule"/>
</dbReference>
<dbReference type="GO" id="GO:0004654">
    <property type="term" value="F:polyribonucleotide nucleotidyltransferase activity"/>
    <property type="evidence" value="ECO:0007669"/>
    <property type="project" value="UniProtKB-UniRule"/>
</dbReference>
<dbReference type="GO" id="GO:0003723">
    <property type="term" value="F:RNA binding"/>
    <property type="evidence" value="ECO:0007669"/>
    <property type="project" value="UniProtKB-UniRule"/>
</dbReference>
<dbReference type="GO" id="GO:0006402">
    <property type="term" value="P:mRNA catabolic process"/>
    <property type="evidence" value="ECO:0007669"/>
    <property type="project" value="UniProtKB-UniRule"/>
</dbReference>
<dbReference type="GO" id="GO:0006396">
    <property type="term" value="P:RNA processing"/>
    <property type="evidence" value="ECO:0007669"/>
    <property type="project" value="InterPro"/>
</dbReference>
<dbReference type="CDD" id="cd02393">
    <property type="entry name" value="KH-I_PNPase"/>
    <property type="match status" value="1"/>
</dbReference>
<dbReference type="CDD" id="cd11364">
    <property type="entry name" value="RNase_PH_PNPase_2"/>
    <property type="match status" value="1"/>
</dbReference>
<dbReference type="CDD" id="cd04472">
    <property type="entry name" value="S1_PNPase"/>
    <property type="match status" value="1"/>
</dbReference>
<dbReference type="FunFam" id="2.40.50.140:FF:000069">
    <property type="entry name" value="Polyribonucleotide nucleotidyltransferase"/>
    <property type="match status" value="1"/>
</dbReference>
<dbReference type="FunFam" id="3.30.1370.10:FF:000001">
    <property type="entry name" value="Polyribonucleotide nucleotidyltransferase"/>
    <property type="match status" value="1"/>
</dbReference>
<dbReference type="FunFam" id="3.30.230.70:FF:000001">
    <property type="entry name" value="Polyribonucleotide nucleotidyltransferase"/>
    <property type="match status" value="1"/>
</dbReference>
<dbReference type="FunFam" id="3.30.230.70:FF:000002">
    <property type="entry name" value="Polyribonucleotide nucleotidyltransferase"/>
    <property type="match status" value="1"/>
</dbReference>
<dbReference type="Gene3D" id="3.30.230.70">
    <property type="entry name" value="GHMP Kinase, N-terminal domain"/>
    <property type="match status" value="2"/>
</dbReference>
<dbReference type="Gene3D" id="3.30.1370.10">
    <property type="entry name" value="K Homology domain, type 1"/>
    <property type="match status" value="1"/>
</dbReference>
<dbReference type="Gene3D" id="2.40.50.140">
    <property type="entry name" value="Nucleic acid-binding proteins"/>
    <property type="match status" value="1"/>
</dbReference>
<dbReference type="HAMAP" id="MF_01595">
    <property type="entry name" value="PNPase"/>
    <property type="match status" value="1"/>
</dbReference>
<dbReference type="InterPro" id="IPR001247">
    <property type="entry name" value="ExoRNase_PH_dom1"/>
</dbReference>
<dbReference type="InterPro" id="IPR036345">
    <property type="entry name" value="ExoRNase_PH_dom2_sf"/>
</dbReference>
<dbReference type="InterPro" id="IPR014069">
    <property type="entry name" value="GPSI/PNP"/>
</dbReference>
<dbReference type="InterPro" id="IPR004087">
    <property type="entry name" value="KH_dom"/>
</dbReference>
<dbReference type="InterPro" id="IPR004088">
    <property type="entry name" value="KH_dom_type_1"/>
</dbReference>
<dbReference type="InterPro" id="IPR036612">
    <property type="entry name" value="KH_dom_type_1_sf"/>
</dbReference>
<dbReference type="InterPro" id="IPR012340">
    <property type="entry name" value="NA-bd_OB-fold"/>
</dbReference>
<dbReference type="InterPro" id="IPR012162">
    <property type="entry name" value="PNPase"/>
</dbReference>
<dbReference type="InterPro" id="IPR027408">
    <property type="entry name" value="PNPase/RNase_PH_dom_sf"/>
</dbReference>
<dbReference type="InterPro" id="IPR015848">
    <property type="entry name" value="PNPase_PH_RNA-bd_bac/org-type"/>
</dbReference>
<dbReference type="InterPro" id="IPR036456">
    <property type="entry name" value="PNPase_PH_RNA-bd_sf"/>
</dbReference>
<dbReference type="InterPro" id="IPR020568">
    <property type="entry name" value="Ribosomal_Su5_D2-typ_SF"/>
</dbReference>
<dbReference type="InterPro" id="IPR003029">
    <property type="entry name" value="S1_domain"/>
</dbReference>
<dbReference type="NCBIfam" id="TIGR03591">
    <property type="entry name" value="polynuc_phos"/>
    <property type="match status" value="1"/>
</dbReference>
<dbReference type="NCBIfam" id="TIGR02696">
    <property type="entry name" value="pppGpp_PNP"/>
    <property type="match status" value="1"/>
</dbReference>
<dbReference type="NCBIfam" id="NF008805">
    <property type="entry name" value="PRK11824.1"/>
    <property type="match status" value="1"/>
</dbReference>
<dbReference type="PANTHER" id="PTHR11252">
    <property type="entry name" value="POLYRIBONUCLEOTIDE NUCLEOTIDYLTRANSFERASE"/>
    <property type="match status" value="1"/>
</dbReference>
<dbReference type="PANTHER" id="PTHR11252:SF0">
    <property type="entry name" value="POLYRIBONUCLEOTIDE NUCLEOTIDYLTRANSFERASE 1, MITOCHONDRIAL"/>
    <property type="match status" value="1"/>
</dbReference>
<dbReference type="Pfam" id="PF00013">
    <property type="entry name" value="KH_1"/>
    <property type="match status" value="1"/>
</dbReference>
<dbReference type="Pfam" id="PF03726">
    <property type="entry name" value="PNPase"/>
    <property type="match status" value="1"/>
</dbReference>
<dbReference type="Pfam" id="PF01138">
    <property type="entry name" value="RNase_PH"/>
    <property type="match status" value="2"/>
</dbReference>
<dbReference type="Pfam" id="PF00575">
    <property type="entry name" value="S1"/>
    <property type="match status" value="1"/>
</dbReference>
<dbReference type="PIRSF" id="PIRSF005499">
    <property type="entry name" value="PNPase"/>
    <property type="match status" value="1"/>
</dbReference>
<dbReference type="SMART" id="SM00322">
    <property type="entry name" value="KH"/>
    <property type="match status" value="1"/>
</dbReference>
<dbReference type="SMART" id="SM00316">
    <property type="entry name" value="S1"/>
    <property type="match status" value="1"/>
</dbReference>
<dbReference type="SUPFAM" id="SSF54791">
    <property type="entry name" value="Eukaryotic type KH-domain (KH-domain type I)"/>
    <property type="match status" value="1"/>
</dbReference>
<dbReference type="SUPFAM" id="SSF50249">
    <property type="entry name" value="Nucleic acid-binding proteins"/>
    <property type="match status" value="1"/>
</dbReference>
<dbReference type="SUPFAM" id="SSF46915">
    <property type="entry name" value="Polynucleotide phosphorylase/guanosine pentaphosphate synthase (PNPase/GPSI), domain 3"/>
    <property type="match status" value="1"/>
</dbReference>
<dbReference type="SUPFAM" id="SSF55666">
    <property type="entry name" value="Ribonuclease PH domain 2-like"/>
    <property type="match status" value="2"/>
</dbReference>
<dbReference type="SUPFAM" id="SSF54211">
    <property type="entry name" value="Ribosomal protein S5 domain 2-like"/>
    <property type="match status" value="2"/>
</dbReference>
<dbReference type="PROSITE" id="PS50084">
    <property type="entry name" value="KH_TYPE_1"/>
    <property type="match status" value="1"/>
</dbReference>
<dbReference type="PROSITE" id="PS50126">
    <property type="entry name" value="S1"/>
    <property type="match status" value="1"/>
</dbReference>
<accession>Q73VX0</accession>
<organism>
    <name type="scientific">Mycolicibacterium paratuberculosis (strain ATCC BAA-968 / K-10)</name>
    <name type="common">Mycobacterium paratuberculosis</name>
    <dbReference type="NCBI Taxonomy" id="262316"/>
    <lineage>
        <taxon>Bacteria</taxon>
        <taxon>Bacillati</taxon>
        <taxon>Actinomycetota</taxon>
        <taxon>Actinomycetes</taxon>
        <taxon>Mycobacteriales</taxon>
        <taxon>Mycobacteriaceae</taxon>
        <taxon>Mycobacterium</taxon>
        <taxon>Mycobacterium avium complex (MAC)</taxon>
    </lineage>
</organism>
<feature type="chain" id="PRO_0000329719" description="Polyribonucleotide nucleotidyltransferase">
    <location>
        <begin position="1"/>
        <end position="757"/>
    </location>
</feature>
<feature type="domain" description="KH" evidence="1">
    <location>
        <begin position="597"/>
        <end position="656"/>
    </location>
</feature>
<feature type="domain" description="S1 motif" evidence="1">
    <location>
        <begin position="668"/>
        <end position="737"/>
    </location>
</feature>
<feature type="binding site" evidence="1">
    <location>
        <position position="531"/>
    </location>
    <ligand>
        <name>Mg(2+)</name>
        <dbReference type="ChEBI" id="CHEBI:18420"/>
    </ligand>
</feature>
<feature type="binding site" evidence="1">
    <location>
        <position position="537"/>
    </location>
    <ligand>
        <name>Mg(2+)</name>
        <dbReference type="ChEBI" id="CHEBI:18420"/>
    </ligand>
</feature>
<gene>
    <name evidence="1" type="primary">pnp</name>
    <name type="ordered locus">MAP_2891c</name>
</gene>
<proteinExistence type="inferred from homology"/>
<reference key="1">
    <citation type="journal article" date="2005" name="Proc. Natl. Acad. Sci. U.S.A.">
        <title>The complete genome sequence of Mycobacterium avium subspecies paratuberculosis.</title>
        <authorList>
            <person name="Li L."/>
            <person name="Bannantine J.P."/>
            <person name="Zhang Q."/>
            <person name="Amonsin A."/>
            <person name="May B.J."/>
            <person name="Alt D."/>
            <person name="Banerji N."/>
            <person name="Kanjilal S."/>
            <person name="Kapur V."/>
        </authorList>
    </citation>
    <scope>NUCLEOTIDE SEQUENCE [LARGE SCALE GENOMIC DNA]</scope>
    <source>
        <strain>ATCC BAA-968 / K-10</strain>
    </source>
</reference>
<evidence type="ECO:0000255" key="1">
    <source>
        <dbReference type="HAMAP-Rule" id="MF_01595"/>
    </source>
</evidence>
<comment type="function">
    <text evidence="1">Involved in mRNA degradation. Catalyzes the phosphorolysis of single-stranded polyribonucleotides processively in the 3'- to 5'-direction.</text>
</comment>
<comment type="catalytic activity">
    <reaction evidence="1">
        <text>RNA(n+1) + phosphate = RNA(n) + a ribonucleoside 5'-diphosphate</text>
        <dbReference type="Rhea" id="RHEA:22096"/>
        <dbReference type="Rhea" id="RHEA-COMP:14527"/>
        <dbReference type="Rhea" id="RHEA-COMP:17342"/>
        <dbReference type="ChEBI" id="CHEBI:43474"/>
        <dbReference type="ChEBI" id="CHEBI:57930"/>
        <dbReference type="ChEBI" id="CHEBI:140395"/>
        <dbReference type="EC" id="2.7.7.8"/>
    </reaction>
</comment>
<comment type="cofactor">
    <cofactor evidence="1">
        <name>Mg(2+)</name>
        <dbReference type="ChEBI" id="CHEBI:18420"/>
    </cofactor>
</comment>
<comment type="subcellular location">
    <subcellularLocation>
        <location evidence="1">Cytoplasm</location>
    </subcellularLocation>
</comment>
<comment type="similarity">
    <text evidence="1">Belongs to the polyribonucleotide nucleotidyltransferase family.</text>
</comment>